<feature type="chain" id="PRO_0000264589" description="Phosphoribosylformylglycinamidine synthase">
    <location>
        <begin position="1"/>
        <end position="1298"/>
    </location>
</feature>
<feature type="domain" description="Glutamine amidotransferase type-1" evidence="1">
    <location>
        <begin position="1045"/>
        <end position="1298"/>
    </location>
</feature>
<feature type="region of interest" description="Disordered" evidence="2">
    <location>
        <begin position="303"/>
        <end position="327"/>
    </location>
</feature>
<feature type="active site" description="Nucleophile" evidence="1">
    <location>
        <position position="1138"/>
    </location>
</feature>
<feature type="active site" evidence="1">
    <location>
        <position position="1263"/>
    </location>
</feature>
<feature type="active site" evidence="1">
    <location>
        <position position="1265"/>
    </location>
</feature>
<feature type="binding site" evidence="1">
    <location>
        <begin position="305"/>
        <end position="316"/>
    </location>
    <ligand>
        <name>ATP</name>
        <dbReference type="ChEBI" id="CHEBI:30616"/>
    </ligand>
</feature>
<feature type="binding site" evidence="1">
    <location>
        <begin position="384"/>
        <end position="386"/>
    </location>
    <ligand>
        <name>ATP</name>
        <dbReference type="ChEBI" id="CHEBI:30616"/>
    </ligand>
</feature>
<feature type="binding site" evidence="1">
    <location>
        <position position="676"/>
    </location>
    <ligand>
        <name>ATP</name>
        <dbReference type="ChEBI" id="CHEBI:30616"/>
    </ligand>
</feature>
<feature type="binding site" evidence="1">
    <location>
        <position position="677"/>
    </location>
    <ligand>
        <name>Mg(2+)</name>
        <dbReference type="ChEBI" id="CHEBI:18420"/>
    </ligand>
</feature>
<feature type="binding site" evidence="1">
    <location>
        <position position="716"/>
    </location>
    <ligand>
        <name>Mg(2+)</name>
        <dbReference type="ChEBI" id="CHEBI:18420"/>
    </ligand>
</feature>
<feature type="binding site" evidence="1">
    <location>
        <position position="720"/>
    </location>
    <ligand>
        <name>Mg(2+)</name>
        <dbReference type="ChEBI" id="CHEBI:18420"/>
    </ligand>
</feature>
<feature type="binding site" evidence="1">
    <location>
        <position position="884"/>
    </location>
    <ligand>
        <name>Mg(2+)</name>
        <dbReference type="ChEBI" id="CHEBI:18420"/>
    </ligand>
</feature>
<feature type="binding site" evidence="1">
    <location>
        <position position="886"/>
    </location>
    <ligand>
        <name>ATP</name>
        <dbReference type="ChEBI" id="CHEBI:30616"/>
    </ligand>
</feature>
<organism>
    <name type="scientific">Pseudomonas savastanoi pv. phaseolicola (strain 1448A / Race 6)</name>
    <name type="common">Pseudomonas syringae pv. phaseolicola (strain 1448A / Race 6)</name>
    <dbReference type="NCBI Taxonomy" id="264730"/>
    <lineage>
        <taxon>Bacteria</taxon>
        <taxon>Pseudomonadati</taxon>
        <taxon>Pseudomonadota</taxon>
        <taxon>Gammaproteobacteria</taxon>
        <taxon>Pseudomonadales</taxon>
        <taxon>Pseudomonadaceae</taxon>
        <taxon>Pseudomonas</taxon>
    </lineage>
</organism>
<evidence type="ECO:0000255" key="1">
    <source>
        <dbReference type="HAMAP-Rule" id="MF_00419"/>
    </source>
</evidence>
<evidence type="ECO:0000256" key="2">
    <source>
        <dbReference type="SAM" id="MobiDB-lite"/>
    </source>
</evidence>
<evidence type="ECO:0000305" key="3"/>
<protein>
    <recommendedName>
        <fullName evidence="1">Phosphoribosylformylglycinamidine synthase</fullName>
        <shortName evidence="1">FGAM synthase</shortName>
        <shortName evidence="1">FGAMS</shortName>
        <ecNumber evidence="1">6.3.5.3</ecNumber>
    </recommendedName>
    <alternativeName>
        <fullName evidence="1">Formylglycinamide ribonucleotide amidotransferase</fullName>
        <shortName evidence="1">FGAR amidotransferase</shortName>
        <shortName evidence="1">FGAR-AT</shortName>
    </alternativeName>
</protein>
<reference key="1">
    <citation type="journal article" date="2005" name="J. Bacteriol.">
        <title>Whole-genome sequence analysis of Pseudomonas syringae pv. phaseolicola 1448A reveals divergence among pathovars in genes involved in virulence and transposition.</title>
        <authorList>
            <person name="Joardar V."/>
            <person name="Lindeberg M."/>
            <person name="Jackson R.W."/>
            <person name="Selengut J."/>
            <person name="Dodson R."/>
            <person name="Brinkac L.M."/>
            <person name="Daugherty S.C."/>
            <person name="DeBoy R.T."/>
            <person name="Durkin A.S."/>
            <person name="Gwinn Giglio M."/>
            <person name="Madupu R."/>
            <person name="Nelson W.C."/>
            <person name="Rosovitz M.J."/>
            <person name="Sullivan S.A."/>
            <person name="Crabtree J."/>
            <person name="Creasy T."/>
            <person name="Davidsen T.M."/>
            <person name="Haft D.H."/>
            <person name="Zafar N."/>
            <person name="Zhou L."/>
            <person name="Halpin R."/>
            <person name="Holley T."/>
            <person name="Khouri H.M."/>
            <person name="Feldblyum T.V."/>
            <person name="White O."/>
            <person name="Fraser C.M."/>
            <person name="Chatterjee A.K."/>
            <person name="Cartinhour S."/>
            <person name="Schneider D."/>
            <person name="Mansfield J.W."/>
            <person name="Collmer A."/>
            <person name="Buell R."/>
        </authorList>
    </citation>
    <scope>NUCLEOTIDE SEQUENCE [LARGE SCALE GENOMIC DNA]</scope>
    <source>
        <strain>1448A / Race 6</strain>
    </source>
</reference>
<gene>
    <name evidence="1" type="primary">purL</name>
    <name type="ordered locus">PSPPH_1341</name>
</gene>
<comment type="function">
    <text evidence="1">Phosphoribosylformylglycinamidine synthase involved in the purines biosynthetic pathway. Catalyzes the ATP-dependent conversion of formylglycinamide ribonucleotide (FGAR) and glutamine to yield formylglycinamidine ribonucleotide (FGAM) and glutamate.</text>
</comment>
<comment type="catalytic activity">
    <reaction evidence="1">
        <text>N(2)-formyl-N(1)-(5-phospho-beta-D-ribosyl)glycinamide + L-glutamine + ATP + H2O = 2-formamido-N(1)-(5-O-phospho-beta-D-ribosyl)acetamidine + L-glutamate + ADP + phosphate + H(+)</text>
        <dbReference type="Rhea" id="RHEA:17129"/>
        <dbReference type="ChEBI" id="CHEBI:15377"/>
        <dbReference type="ChEBI" id="CHEBI:15378"/>
        <dbReference type="ChEBI" id="CHEBI:29985"/>
        <dbReference type="ChEBI" id="CHEBI:30616"/>
        <dbReference type="ChEBI" id="CHEBI:43474"/>
        <dbReference type="ChEBI" id="CHEBI:58359"/>
        <dbReference type="ChEBI" id="CHEBI:147286"/>
        <dbReference type="ChEBI" id="CHEBI:147287"/>
        <dbReference type="ChEBI" id="CHEBI:456216"/>
        <dbReference type="EC" id="6.3.5.3"/>
    </reaction>
</comment>
<comment type="pathway">
    <text evidence="1">Purine metabolism; IMP biosynthesis via de novo pathway; 5-amino-1-(5-phospho-D-ribosyl)imidazole from N(2)-formyl-N(1)-(5-phospho-D-ribosyl)glycinamide: step 1/2.</text>
</comment>
<comment type="subunit">
    <text evidence="1">Monomer.</text>
</comment>
<comment type="subcellular location">
    <subcellularLocation>
        <location evidence="1">Cytoplasm</location>
    </subcellularLocation>
</comment>
<comment type="similarity">
    <text evidence="1">In the N-terminal section; belongs to the FGAMS family.</text>
</comment>
<comment type="sequence caution" evidence="3">
    <conflict type="erroneous initiation">
        <sequence resource="EMBL-CDS" id="AAZ34425"/>
    </conflict>
    <text>Extended N-terminus.</text>
</comment>
<accession>Q48LX3</accession>
<sequence length="1298" mass="140902">MLILRGAPALSAFRHSKLLEQLKQKVSAVSGLYAEFAHFADVNDVLTSEEQQVLDRLLKYGPSVPVQEPSGRLFLVLPRFGTISPWSSKASDIARNCGLTKIQRIERGIAFYVEGQFSEAQAQAIADSLHDRMTQLVLGDHEQAASLFSHAQPKPLTAVDILGGGRAALEKANVELGLALAEDEIDYLITSFNGLGRNPHDIELMMFAQANSEHCRHKIFNASWDIDGQSQEKSLFGMIKNTYQMHSEGVLSAYKDNASVIVGNVAGRFFPDPETRQYGAVQEPVHILMKVETHNHPTAIAPFPGAATGSGGEIRDEGATGRGAKPKAGLTGFTVSNLQIPGFVQPWEVPYGKPERIVTALDIMIEGPLGGAAFNNEFGRPALTGYFRTFEQSITTPHGDEVRGYHKPIMLAGGMGNIREDHVQKGEITVGSKLIVLGGPAMLIGLGGGAASSMATGTSSADLDFASVQRENPEMERRCQEVIDRCWQLGDRNPISFIHDVGAGGLSNAFPELVNDGDRGGRFELRNVPNDEPGMAPLEIWSNESQERYVLAVGVEDFDRFKAICERERCPFAVVGEATAEPQLTVTDSHFGNSPVDMPLEVLLGKVPRMHRSVEREAEIGDDFDPSTLDIEESVQRVLRHPAVASKSFLITIGDRSITGLVARDQMVGPWQVPVADCAVTATSFDVNTGEAMAMGERTPLALLDAPASGRMAIGETLTNIAASCIEKLSDIKLSANWMSAAGHPGEDARLYDTVKAVGMELCPELGITIPVGKDSMSMKTRWSDEGTEKSVTSPLSLIVTGFAPVVDIRQTLTPELRMDKGITDLILIDLGRGQNRMGASILAQTHGKLGRVAPDVDDAEDLKAFFAVIQGLNSDGHILSYHDRSDGGLLVSTLEMAFAGHCGLNLHLDGVADNVSELSAILFNEELGAVIQVRQDATPLVLAQFSAAGLEDCVAVIGQPINNDEVSISFHGEPVFSGQRRLLQRQWAETSYQIQRLRDNAECADQEFDALLEEDNPGLTVKLGFDVNEDIAAPYIKTGVRPQVAVLREQGVNGQVEMAAAFDRAGFNAIDVHMSDILAGRVDLNDFKGMVACGGFSYGDVLGAGEGWAKSALFNSRARDAFQGFFERADSFTLGVCNGCQMLSNLHELIPGSEFWPHFVRNRSEQFEARVAMVQVQESASIFLQGMAGSRMPIAIAHGEGHAEFRNDDALLEADVSGTVALRFVDNHGKVTETYPANPNGSPRGIGGMTTLDGRVTIMMPHPERVFRAVQNSWRPEDWNEDAAWMRMFRNARAWVN</sequence>
<proteinExistence type="inferred from homology"/>
<keyword id="KW-0067">ATP-binding</keyword>
<keyword id="KW-0963">Cytoplasm</keyword>
<keyword id="KW-0315">Glutamine amidotransferase</keyword>
<keyword id="KW-0436">Ligase</keyword>
<keyword id="KW-0460">Magnesium</keyword>
<keyword id="KW-0479">Metal-binding</keyword>
<keyword id="KW-0547">Nucleotide-binding</keyword>
<keyword id="KW-0658">Purine biosynthesis</keyword>
<dbReference type="EC" id="6.3.5.3" evidence="1"/>
<dbReference type="EMBL" id="CP000058">
    <property type="protein sequence ID" value="AAZ34425.1"/>
    <property type="status" value="ALT_INIT"/>
    <property type="molecule type" value="Genomic_DNA"/>
</dbReference>
<dbReference type="RefSeq" id="WP_041924472.1">
    <property type="nucleotide sequence ID" value="NC_005773.3"/>
</dbReference>
<dbReference type="SMR" id="Q48LX3"/>
<dbReference type="KEGG" id="psp:PSPPH_1341"/>
<dbReference type="eggNOG" id="COG0046">
    <property type="taxonomic scope" value="Bacteria"/>
</dbReference>
<dbReference type="eggNOG" id="COG0047">
    <property type="taxonomic scope" value="Bacteria"/>
</dbReference>
<dbReference type="HOGENOM" id="CLU_001031_0_2_6"/>
<dbReference type="UniPathway" id="UPA00074">
    <property type="reaction ID" value="UER00128"/>
</dbReference>
<dbReference type="Proteomes" id="UP000000551">
    <property type="component" value="Chromosome"/>
</dbReference>
<dbReference type="GO" id="GO:0005737">
    <property type="term" value="C:cytoplasm"/>
    <property type="evidence" value="ECO:0007669"/>
    <property type="project" value="UniProtKB-SubCell"/>
</dbReference>
<dbReference type="GO" id="GO:0005524">
    <property type="term" value="F:ATP binding"/>
    <property type="evidence" value="ECO:0007669"/>
    <property type="project" value="UniProtKB-UniRule"/>
</dbReference>
<dbReference type="GO" id="GO:0046872">
    <property type="term" value="F:metal ion binding"/>
    <property type="evidence" value="ECO:0007669"/>
    <property type="project" value="UniProtKB-KW"/>
</dbReference>
<dbReference type="GO" id="GO:0004642">
    <property type="term" value="F:phosphoribosylformylglycinamidine synthase activity"/>
    <property type="evidence" value="ECO:0007669"/>
    <property type="project" value="UniProtKB-UniRule"/>
</dbReference>
<dbReference type="GO" id="GO:0006189">
    <property type="term" value="P:'de novo' IMP biosynthetic process"/>
    <property type="evidence" value="ECO:0007669"/>
    <property type="project" value="UniProtKB-UniRule"/>
</dbReference>
<dbReference type="CDD" id="cd01740">
    <property type="entry name" value="GATase1_FGAR_AT"/>
    <property type="match status" value="1"/>
</dbReference>
<dbReference type="CDD" id="cd02203">
    <property type="entry name" value="PurL_repeat1"/>
    <property type="match status" value="1"/>
</dbReference>
<dbReference type="CDD" id="cd02204">
    <property type="entry name" value="PurL_repeat2"/>
    <property type="match status" value="1"/>
</dbReference>
<dbReference type="FunFam" id="1.10.8.750:FF:000002">
    <property type="entry name" value="Phosphoribosylformylglycinamidine synthase"/>
    <property type="match status" value="1"/>
</dbReference>
<dbReference type="FunFam" id="3.30.1330.10:FF:000002">
    <property type="entry name" value="Phosphoribosylformylglycinamidine synthase"/>
    <property type="match status" value="1"/>
</dbReference>
<dbReference type="FunFam" id="3.30.1330.10:FF:000005">
    <property type="entry name" value="Phosphoribosylformylglycinamidine synthase"/>
    <property type="match status" value="1"/>
</dbReference>
<dbReference type="FunFam" id="3.40.50.880:FF:000008">
    <property type="entry name" value="Phosphoribosylformylglycinamidine synthase"/>
    <property type="match status" value="1"/>
</dbReference>
<dbReference type="FunFam" id="3.90.650.10:FF:000002">
    <property type="entry name" value="Phosphoribosylformylglycinamidine synthase"/>
    <property type="match status" value="1"/>
</dbReference>
<dbReference type="FunFam" id="3.90.650.10:FF:000005">
    <property type="entry name" value="Phosphoribosylformylglycinamidine synthase"/>
    <property type="match status" value="1"/>
</dbReference>
<dbReference type="Gene3D" id="3.40.50.880">
    <property type="match status" value="1"/>
</dbReference>
<dbReference type="Gene3D" id="1.10.8.750">
    <property type="entry name" value="Phosphoribosylformylglycinamidine synthase, linker domain"/>
    <property type="match status" value="1"/>
</dbReference>
<dbReference type="Gene3D" id="3.90.650.10">
    <property type="entry name" value="PurM-like C-terminal domain"/>
    <property type="match status" value="2"/>
</dbReference>
<dbReference type="Gene3D" id="3.30.1330.10">
    <property type="entry name" value="PurM-like, N-terminal domain"/>
    <property type="match status" value="2"/>
</dbReference>
<dbReference type="HAMAP" id="MF_00419">
    <property type="entry name" value="PurL_1"/>
    <property type="match status" value="1"/>
</dbReference>
<dbReference type="InterPro" id="IPR029062">
    <property type="entry name" value="Class_I_gatase-like"/>
</dbReference>
<dbReference type="InterPro" id="IPR040707">
    <property type="entry name" value="FGAR-AT_N"/>
</dbReference>
<dbReference type="InterPro" id="IPR055181">
    <property type="entry name" value="FGAR-AT_PurM_N-like"/>
</dbReference>
<dbReference type="InterPro" id="IPR010073">
    <property type="entry name" value="PurL_large"/>
</dbReference>
<dbReference type="InterPro" id="IPR041609">
    <property type="entry name" value="PurL_linker"/>
</dbReference>
<dbReference type="InterPro" id="IPR010918">
    <property type="entry name" value="PurM-like_C_dom"/>
</dbReference>
<dbReference type="InterPro" id="IPR036676">
    <property type="entry name" value="PurM-like_C_sf"/>
</dbReference>
<dbReference type="InterPro" id="IPR036921">
    <property type="entry name" value="PurM-like_N_sf"/>
</dbReference>
<dbReference type="InterPro" id="IPR036604">
    <property type="entry name" value="PurS-like_sf"/>
</dbReference>
<dbReference type="NCBIfam" id="TIGR01735">
    <property type="entry name" value="FGAM_synt"/>
    <property type="match status" value="1"/>
</dbReference>
<dbReference type="NCBIfam" id="NF003672">
    <property type="entry name" value="PRK05297.1"/>
    <property type="match status" value="1"/>
</dbReference>
<dbReference type="PANTHER" id="PTHR10099">
    <property type="entry name" value="PHOSPHORIBOSYLFORMYLGLYCINAMIDINE SYNTHASE"/>
    <property type="match status" value="1"/>
</dbReference>
<dbReference type="PANTHER" id="PTHR10099:SF1">
    <property type="entry name" value="PHOSPHORIBOSYLFORMYLGLYCINAMIDINE SYNTHASE"/>
    <property type="match status" value="1"/>
</dbReference>
<dbReference type="Pfam" id="PF02769">
    <property type="entry name" value="AIRS_C"/>
    <property type="match status" value="2"/>
</dbReference>
<dbReference type="Pfam" id="PF18072">
    <property type="entry name" value="FGAR-AT_linker"/>
    <property type="match status" value="1"/>
</dbReference>
<dbReference type="Pfam" id="PF18076">
    <property type="entry name" value="FGAR-AT_N"/>
    <property type="match status" value="1"/>
</dbReference>
<dbReference type="Pfam" id="PF22689">
    <property type="entry name" value="FGAR-AT_PurM_N-like"/>
    <property type="match status" value="1"/>
</dbReference>
<dbReference type="Pfam" id="PF13507">
    <property type="entry name" value="GATase_5"/>
    <property type="match status" value="1"/>
</dbReference>
<dbReference type="SMART" id="SM01211">
    <property type="entry name" value="GATase_5"/>
    <property type="match status" value="1"/>
</dbReference>
<dbReference type="SUPFAM" id="SSF52317">
    <property type="entry name" value="Class I glutamine amidotransferase-like"/>
    <property type="match status" value="1"/>
</dbReference>
<dbReference type="SUPFAM" id="SSF109736">
    <property type="entry name" value="FGAM synthase PurL, linker domain"/>
    <property type="match status" value="1"/>
</dbReference>
<dbReference type="SUPFAM" id="SSF56042">
    <property type="entry name" value="PurM C-terminal domain-like"/>
    <property type="match status" value="2"/>
</dbReference>
<dbReference type="SUPFAM" id="SSF55326">
    <property type="entry name" value="PurM N-terminal domain-like"/>
    <property type="match status" value="2"/>
</dbReference>
<dbReference type="SUPFAM" id="SSF82697">
    <property type="entry name" value="PurS-like"/>
    <property type="match status" value="1"/>
</dbReference>
<dbReference type="PROSITE" id="PS51273">
    <property type="entry name" value="GATASE_TYPE_1"/>
    <property type="match status" value="1"/>
</dbReference>
<name>PUR4_PSE14</name>